<gene>
    <name type="primary">POP3</name>
    <name type="ordered locus">YNL282W</name>
    <name type="ORF">N0586</name>
</gene>
<sequence>MSGSLKSLDKKIAKRRQVYKPVLDNPFTNEAHMWPRVHDQPLIWQLLQSSIINKLIHIQSKENYPWELYTDFNEIVQYLSGAHGNSDPVCLFVCNKDPDVPLVLLQQIPLLCYMAPMTVKLVQLPKSAMDTFKSVSKYGMLLLRCDDRVDKKFVSQIQKNVDLLQFPWLNAIKYRPTSVKLLKTTVPIVSKKRQK</sequence>
<keyword id="KW-0002">3D-structure</keyword>
<keyword id="KW-0539">Nucleus</keyword>
<keyword id="KW-1185">Reference proteome</keyword>
<keyword id="KW-0698">rRNA processing</keyword>
<keyword id="KW-0819">tRNA processing</keyword>
<organism>
    <name type="scientific">Saccharomyces cerevisiae (strain ATCC 204508 / S288c)</name>
    <name type="common">Baker's yeast</name>
    <dbReference type="NCBI Taxonomy" id="559292"/>
    <lineage>
        <taxon>Eukaryota</taxon>
        <taxon>Fungi</taxon>
        <taxon>Dikarya</taxon>
        <taxon>Ascomycota</taxon>
        <taxon>Saccharomycotina</taxon>
        <taxon>Saccharomycetes</taxon>
        <taxon>Saccharomycetales</taxon>
        <taxon>Saccharomycetaceae</taxon>
        <taxon>Saccharomyces</taxon>
    </lineage>
</organism>
<feature type="chain" id="PRO_0000058516" description="Ribonucleases P/MRP protein subunit POP3">
    <location>
        <begin position="1"/>
        <end position="195"/>
    </location>
</feature>
<feature type="strand" evidence="7">
    <location>
        <begin position="15"/>
        <end position="23"/>
    </location>
</feature>
<feature type="turn" evidence="9">
    <location>
        <begin position="29"/>
        <end position="31"/>
    </location>
</feature>
<feature type="strand" evidence="9">
    <location>
        <begin position="38"/>
        <end position="40"/>
    </location>
</feature>
<feature type="helix" evidence="8">
    <location>
        <begin position="41"/>
        <end position="55"/>
    </location>
</feature>
<feature type="turn" evidence="8">
    <location>
        <begin position="59"/>
        <end position="65"/>
    </location>
</feature>
<feature type="helix" evidence="8">
    <location>
        <begin position="72"/>
        <end position="80"/>
    </location>
</feature>
<feature type="strand" evidence="8">
    <location>
        <begin position="87"/>
        <end position="93"/>
    </location>
</feature>
<feature type="strand" evidence="8">
    <location>
        <begin position="96"/>
        <end position="100"/>
    </location>
</feature>
<feature type="helix" evidence="8">
    <location>
        <begin position="102"/>
        <end position="105"/>
    </location>
</feature>
<feature type="helix" evidence="8">
    <location>
        <begin position="108"/>
        <end position="114"/>
    </location>
</feature>
<feature type="strand" evidence="8">
    <location>
        <begin position="115"/>
        <end position="123"/>
    </location>
</feature>
<feature type="helix" evidence="8">
    <location>
        <begin position="131"/>
        <end position="135"/>
    </location>
</feature>
<feature type="strand" evidence="8">
    <location>
        <begin position="136"/>
        <end position="144"/>
    </location>
</feature>
<feature type="helix" evidence="8">
    <location>
        <begin position="148"/>
        <end position="157"/>
    </location>
</feature>
<feature type="turn" evidence="8">
    <location>
        <begin position="158"/>
        <end position="160"/>
    </location>
</feature>
<feature type="turn" evidence="8">
    <location>
        <begin position="167"/>
        <end position="169"/>
    </location>
</feature>
<feature type="strand" evidence="7">
    <location>
        <begin position="179"/>
        <end position="187"/>
    </location>
</feature>
<comment type="function">
    <text evidence="4 5">Required for processing of 5.8S rRNA (short form) at site A3 and for 5'- and 3'-processing of pre-tRNA.</text>
</comment>
<comment type="subunit">
    <text evidence="3 4 5">Component of nuclear RNase P and RNase MRP complexes. RNase P consists of an RNA moiety and at least 9 protein subunits including POP1, POP3, POP4, POP5, POP6, POP7, POP8, RPP1 and RPR2. RNase MRP complex consists of an RNA moiety and at least 10 protein subunits including POP1, POP3, POP4, POP5, POP6, POP7, POP8, RMP1, RPP1 and SNM1, many of which are shared with the RNase P complex.</text>
</comment>
<comment type="interaction">
    <interactant intactId="EBI-13638">
        <id>P53833</id>
    </interactant>
    <interactant intactId="EBI-13621">
        <id>P41812</id>
        <label>POP1</label>
    </interactant>
    <organismsDiffer>false</organismsDiffer>
    <experiments>5</experiments>
</comment>
<comment type="interaction">
    <interactant intactId="EBI-13638">
        <id>P53833</id>
    </interactant>
    <interactant intactId="EBI-13646">
        <id>P38336</id>
        <label>POP4</label>
    </interactant>
    <organismsDiffer>false</organismsDiffer>
    <experiments>3</experiments>
</comment>
<comment type="subcellular location">
    <subcellularLocation>
        <location evidence="1">Nucleus</location>
    </subcellularLocation>
</comment>
<comment type="miscellaneous">
    <text evidence="2">Present with 1360 molecules/cell in log phase SD medium.</text>
</comment>
<comment type="similarity">
    <text evidence="6">Belongs to the POP3 family.</text>
</comment>
<evidence type="ECO:0000269" key="1">
    <source>
    </source>
</evidence>
<evidence type="ECO:0000269" key="2">
    <source>
    </source>
</evidence>
<evidence type="ECO:0000269" key="3">
    <source>
    </source>
</evidence>
<evidence type="ECO:0000269" key="4">
    <source>
    </source>
</evidence>
<evidence type="ECO:0000269" key="5">
    <source>
    </source>
</evidence>
<evidence type="ECO:0000305" key="6"/>
<evidence type="ECO:0007829" key="7">
    <source>
        <dbReference type="PDB" id="6AGB"/>
    </source>
</evidence>
<evidence type="ECO:0007829" key="8">
    <source>
        <dbReference type="PDB" id="7C79"/>
    </source>
</evidence>
<evidence type="ECO:0007829" key="9">
    <source>
        <dbReference type="PDB" id="7C7A"/>
    </source>
</evidence>
<protein>
    <recommendedName>
        <fullName>Ribonucleases P/MRP protein subunit POP3</fullName>
    </recommendedName>
    <alternativeName>
        <fullName>RNA-processing protein POP3</fullName>
    </alternativeName>
    <alternativeName>
        <fullName>RNases MRP/P 22.6 kDa subunit</fullName>
    </alternativeName>
</protein>
<reference key="1">
    <citation type="journal article" date="1997" name="EMBO J.">
        <title>Pop3p is essential for the activity of the RNase MRP and RNase P ribonucleoproteins in vivo.</title>
        <authorList>
            <person name="Dichtl B."/>
            <person name="Tollervey D."/>
        </authorList>
    </citation>
    <scope>NUCLEOTIDE SEQUENCE [GENOMIC DNA]</scope>
    <scope>FUNCTION</scope>
    <scope>SUBUNIT</scope>
    <source>
        <strain>SL311</strain>
    </source>
</reference>
<reference key="2">
    <citation type="journal article" date="1997" name="Nature">
        <title>The nucleotide sequence of Saccharomyces cerevisiae chromosome XIV and its evolutionary implications.</title>
        <authorList>
            <person name="Philippsen P."/>
            <person name="Kleine K."/>
            <person name="Poehlmann R."/>
            <person name="Duesterhoeft A."/>
            <person name="Hamberg K."/>
            <person name="Hegemann J.H."/>
            <person name="Obermaier B."/>
            <person name="Urrestarazu L.A."/>
            <person name="Aert R."/>
            <person name="Albermann K."/>
            <person name="Altmann R."/>
            <person name="Andre B."/>
            <person name="Baladron V."/>
            <person name="Ballesta J.P.G."/>
            <person name="Becam A.-M."/>
            <person name="Beinhauer J.D."/>
            <person name="Boskovic J."/>
            <person name="Buitrago M.J."/>
            <person name="Bussereau F."/>
            <person name="Coster F."/>
            <person name="Crouzet M."/>
            <person name="D'Angelo M."/>
            <person name="Dal Pero F."/>
            <person name="De Antoni A."/>
            <person name="del Rey F."/>
            <person name="Doignon F."/>
            <person name="Domdey H."/>
            <person name="Dubois E."/>
            <person name="Fiedler T.A."/>
            <person name="Fleig U."/>
            <person name="Floeth M."/>
            <person name="Fritz C."/>
            <person name="Gaillardin C."/>
            <person name="Garcia-Cantalejo J.M."/>
            <person name="Glansdorff N."/>
            <person name="Goffeau A."/>
            <person name="Gueldener U."/>
            <person name="Herbert C.J."/>
            <person name="Heumann K."/>
            <person name="Heuss-Neitzel D."/>
            <person name="Hilbert H."/>
            <person name="Hinni K."/>
            <person name="Iraqui Houssaini I."/>
            <person name="Jacquet M."/>
            <person name="Jimenez A."/>
            <person name="Jonniaux J.-L."/>
            <person name="Karpfinger-Hartl L."/>
            <person name="Lanfranchi G."/>
            <person name="Lepingle A."/>
            <person name="Levesque H."/>
            <person name="Lyck R."/>
            <person name="Maftahi M."/>
            <person name="Mallet L."/>
            <person name="Maurer C.T.C."/>
            <person name="Messenguy F."/>
            <person name="Mewes H.-W."/>
            <person name="Moestl D."/>
            <person name="Nasr F."/>
            <person name="Nicaud J.-M."/>
            <person name="Niedenthal R.K."/>
            <person name="Pandolfo D."/>
            <person name="Pierard A."/>
            <person name="Piravandi E."/>
            <person name="Planta R.J."/>
            <person name="Pohl T.M."/>
            <person name="Purnelle B."/>
            <person name="Rebischung C."/>
            <person name="Remacha M.A."/>
            <person name="Revuelta J.L."/>
            <person name="Rinke M."/>
            <person name="Saiz J.E."/>
            <person name="Sartorello F."/>
            <person name="Scherens B."/>
            <person name="Sen-Gupta M."/>
            <person name="Soler-Mira A."/>
            <person name="Urbanus J.H.M."/>
            <person name="Valle G."/>
            <person name="Van Dyck L."/>
            <person name="Verhasselt P."/>
            <person name="Vierendeels F."/>
            <person name="Vissers S."/>
            <person name="Voet M."/>
            <person name="Volckaert G."/>
            <person name="Wach A."/>
            <person name="Wambutt R."/>
            <person name="Wedler H."/>
            <person name="Zollner A."/>
            <person name="Hani J."/>
        </authorList>
    </citation>
    <scope>NUCLEOTIDE SEQUENCE [LARGE SCALE GENOMIC DNA]</scope>
    <source>
        <strain>ATCC 204508 / S288c</strain>
    </source>
</reference>
<reference key="3">
    <citation type="journal article" date="2014" name="G3 (Bethesda)">
        <title>The reference genome sequence of Saccharomyces cerevisiae: Then and now.</title>
        <authorList>
            <person name="Engel S.R."/>
            <person name="Dietrich F.S."/>
            <person name="Fisk D.G."/>
            <person name="Binkley G."/>
            <person name="Balakrishnan R."/>
            <person name="Costanzo M.C."/>
            <person name="Dwight S.S."/>
            <person name="Hitz B.C."/>
            <person name="Karra K."/>
            <person name="Nash R.S."/>
            <person name="Weng S."/>
            <person name="Wong E.D."/>
            <person name="Lloyd P."/>
            <person name="Skrzypek M.S."/>
            <person name="Miyasato S.R."/>
            <person name="Simison M."/>
            <person name="Cherry J.M."/>
        </authorList>
    </citation>
    <scope>GENOME REANNOTATION</scope>
    <source>
        <strain>ATCC 204508 / S288c</strain>
    </source>
</reference>
<reference key="4">
    <citation type="journal article" date="1998" name="Genes Dev.">
        <title>Purification and characterization of the nuclear RNase P holoenzyme complex reveals extensive subunit overlap with RNase MRP.</title>
        <authorList>
            <person name="Chamberlain J.R."/>
            <person name="Lee Y."/>
            <person name="Lane W.S."/>
            <person name="Engelke D.R."/>
        </authorList>
    </citation>
    <scope>FUNCTION</scope>
    <scope>IDENTIFICATION IN THE RNASE P COMPLEX BY MASS SPECTROMETRY</scope>
</reference>
<reference key="5">
    <citation type="journal article" date="2003" name="Mol. Cell">
        <title>Assigning function to yeast proteins by integration of technologies.</title>
        <authorList>
            <person name="Hazbun T.R."/>
            <person name="Malmstroem L."/>
            <person name="Anderson S."/>
            <person name="Graczyk B.J."/>
            <person name="Fox B."/>
            <person name="Riffle M."/>
            <person name="Sundin B.A."/>
            <person name="Aranda J.D."/>
            <person name="McDonald W.H."/>
            <person name="Chiu C.-H."/>
            <person name="Snydsman B.E."/>
            <person name="Bradley P."/>
            <person name="Muller E.G.D."/>
            <person name="Fields S."/>
            <person name="Baker D."/>
            <person name="Yates J.R. III"/>
            <person name="Davis T.N."/>
        </authorList>
    </citation>
    <scope>IDENTIFICATION BY MASS SPECTROMETRY</scope>
</reference>
<reference key="6">
    <citation type="journal article" date="2003" name="Nature">
        <title>Global analysis of protein localization in budding yeast.</title>
        <authorList>
            <person name="Huh W.-K."/>
            <person name="Falvo J.V."/>
            <person name="Gerke L.C."/>
            <person name="Carroll A.S."/>
            <person name="Howson R.W."/>
            <person name="Weissman J.S."/>
            <person name="O'Shea E.K."/>
        </authorList>
    </citation>
    <scope>SUBCELLULAR LOCATION [LARGE SCALE ANALYSIS]</scope>
</reference>
<reference key="7">
    <citation type="journal article" date="2003" name="Nature">
        <title>Global analysis of protein expression in yeast.</title>
        <authorList>
            <person name="Ghaemmaghami S."/>
            <person name="Huh W.-K."/>
            <person name="Bower K."/>
            <person name="Howson R.W."/>
            <person name="Belle A."/>
            <person name="Dephoure N."/>
            <person name="O'Shea E.K."/>
            <person name="Weissman J.S."/>
        </authorList>
    </citation>
    <scope>LEVEL OF PROTEIN EXPRESSION [LARGE SCALE ANALYSIS]</scope>
</reference>
<reference key="8">
    <citation type="journal article" date="2005" name="J. Biol. Chem.">
        <title>Characterization and purification of Saccharomyces cerevisiae RNase MRP reveals a new unique protein component.</title>
        <authorList>
            <person name="Salinas K."/>
            <person name="Wierzbicki S."/>
            <person name="Zhou L."/>
            <person name="Schmitt M.E."/>
        </authorList>
    </citation>
    <scope>IDENTIFICATION IN THE RNASE MRP COMPLEX BY MASS SPECTROMETRY</scope>
</reference>
<proteinExistence type="evidence at protein level"/>
<dbReference type="EMBL" id="X95844">
    <property type="protein sequence ID" value="CAA65102.1"/>
    <property type="molecule type" value="Genomic_DNA"/>
</dbReference>
<dbReference type="EMBL" id="Z71558">
    <property type="protein sequence ID" value="CAA96194.1"/>
    <property type="molecule type" value="Genomic_DNA"/>
</dbReference>
<dbReference type="EMBL" id="BK006947">
    <property type="protein sequence ID" value="DAA10278.1"/>
    <property type="molecule type" value="Genomic_DNA"/>
</dbReference>
<dbReference type="PIR" id="S63256">
    <property type="entry name" value="S63256"/>
</dbReference>
<dbReference type="RefSeq" id="NP_014117.1">
    <property type="nucleotide sequence ID" value="NM_001183120.1"/>
</dbReference>
<dbReference type="PDB" id="6AGB">
    <property type="method" value="EM"/>
    <property type="resolution" value="3.48 A"/>
    <property type="chains" value="C=1-195"/>
</dbReference>
<dbReference type="PDB" id="6AH3">
    <property type="method" value="EM"/>
    <property type="resolution" value="3.48 A"/>
    <property type="chains" value="C=1-195"/>
</dbReference>
<dbReference type="PDB" id="7C79">
    <property type="method" value="EM"/>
    <property type="resolution" value="2.50 A"/>
    <property type="chains" value="C=1-195"/>
</dbReference>
<dbReference type="PDB" id="7C7A">
    <property type="method" value="EM"/>
    <property type="resolution" value="2.80 A"/>
    <property type="chains" value="C=1-195"/>
</dbReference>
<dbReference type="PDBsum" id="6AGB"/>
<dbReference type="PDBsum" id="6AH3"/>
<dbReference type="PDBsum" id="7C79"/>
<dbReference type="PDBsum" id="7C7A"/>
<dbReference type="EMDB" id="EMD-30296"/>
<dbReference type="EMDB" id="EMD-30297"/>
<dbReference type="EMDB" id="EMD-9616"/>
<dbReference type="EMDB" id="EMD-9622"/>
<dbReference type="SMR" id="P53833"/>
<dbReference type="BioGRID" id="35559">
    <property type="interactions" value="326"/>
</dbReference>
<dbReference type="ComplexPortal" id="CPX-1873">
    <property type="entry name" value="Nucleolar ribonuclease P complex"/>
</dbReference>
<dbReference type="ComplexPortal" id="CPX-3284">
    <property type="entry name" value="Nucleolar ribonuclease MRP complex"/>
</dbReference>
<dbReference type="DIP" id="DIP-4997N"/>
<dbReference type="FunCoup" id="P53833">
    <property type="interactions" value="146"/>
</dbReference>
<dbReference type="IntAct" id="P53833">
    <property type="interactions" value="14"/>
</dbReference>
<dbReference type="MINT" id="P53833"/>
<dbReference type="STRING" id="4932.YNL282W"/>
<dbReference type="PaxDb" id="4932-YNL282W"/>
<dbReference type="PeptideAtlas" id="P53833"/>
<dbReference type="EnsemblFungi" id="YNL282W_mRNA">
    <property type="protein sequence ID" value="YNL282W"/>
    <property type="gene ID" value="YNL282W"/>
</dbReference>
<dbReference type="GeneID" id="855439"/>
<dbReference type="KEGG" id="sce:YNL282W"/>
<dbReference type="AGR" id="SGD:S000005226"/>
<dbReference type="SGD" id="S000005226">
    <property type="gene designation" value="POP3"/>
</dbReference>
<dbReference type="VEuPathDB" id="FungiDB:YNL282W"/>
<dbReference type="eggNOG" id="ENOG502RZX7">
    <property type="taxonomic scope" value="Eukaryota"/>
</dbReference>
<dbReference type="HOGENOM" id="CLU_047273_0_0_1"/>
<dbReference type="InParanoid" id="P53833"/>
<dbReference type="OMA" id="XHIQSKE"/>
<dbReference type="OrthoDB" id="20109at2759"/>
<dbReference type="BioCyc" id="YEAST:G3O-33273-MONOMER"/>
<dbReference type="BioGRID-ORCS" id="855439">
    <property type="hits" value="9 hits in 10 CRISPR screens"/>
</dbReference>
<dbReference type="CD-CODE" id="7CAF9006">
    <property type="entry name" value="Tam body"/>
</dbReference>
<dbReference type="PRO" id="PR:P53833"/>
<dbReference type="Proteomes" id="UP000002311">
    <property type="component" value="Chromosome XIV"/>
</dbReference>
<dbReference type="RNAct" id="P53833">
    <property type="molecule type" value="protein"/>
</dbReference>
<dbReference type="GO" id="GO:0005829">
    <property type="term" value="C:cytosol"/>
    <property type="evidence" value="ECO:0000314"/>
    <property type="project" value="SGD"/>
</dbReference>
<dbReference type="GO" id="GO:0005655">
    <property type="term" value="C:nucleolar ribonuclease P complex"/>
    <property type="evidence" value="ECO:0000314"/>
    <property type="project" value="SGD"/>
</dbReference>
<dbReference type="GO" id="GO:0005634">
    <property type="term" value="C:nucleus"/>
    <property type="evidence" value="ECO:0000314"/>
    <property type="project" value="SGD"/>
</dbReference>
<dbReference type="GO" id="GO:0000172">
    <property type="term" value="C:ribonuclease MRP complex"/>
    <property type="evidence" value="ECO:0000314"/>
    <property type="project" value="SGD"/>
</dbReference>
<dbReference type="GO" id="GO:0034965">
    <property type="term" value="P:intronic box C/D snoRNA processing"/>
    <property type="evidence" value="ECO:0000314"/>
    <property type="project" value="SGD"/>
</dbReference>
<dbReference type="GO" id="GO:0000460">
    <property type="term" value="P:maturation of 5.8S rRNA"/>
    <property type="evidence" value="ECO:0000314"/>
    <property type="project" value="ComplexPortal"/>
</dbReference>
<dbReference type="GO" id="GO:0000294">
    <property type="term" value="P:nuclear-transcribed mRNA catabolic process, RNase MRP-dependent"/>
    <property type="evidence" value="ECO:0000314"/>
    <property type="project" value="SGD"/>
</dbReference>
<dbReference type="GO" id="GO:0006364">
    <property type="term" value="P:rRNA processing"/>
    <property type="evidence" value="ECO:0000315"/>
    <property type="project" value="SGD"/>
</dbReference>
<dbReference type="GO" id="GO:0001682">
    <property type="term" value="P:tRNA 5'-leader removal"/>
    <property type="evidence" value="ECO:0000314"/>
    <property type="project" value="ComplexPortal"/>
</dbReference>
<dbReference type="GO" id="GO:0008033">
    <property type="term" value="P:tRNA processing"/>
    <property type="evidence" value="ECO:0000315"/>
    <property type="project" value="SGD"/>
</dbReference>
<dbReference type="InterPro" id="IPR013241">
    <property type="entry name" value="RNase_P_Pop3"/>
</dbReference>
<dbReference type="PANTHER" id="PTHR28272">
    <property type="entry name" value="RIBONUCLEASES P/MRP PROTEIN SUBUNIT POP3"/>
    <property type="match status" value="1"/>
</dbReference>
<dbReference type="PANTHER" id="PTHR28272:SF1">
    <property type="entry name" value="RIBONUCLEASES P_MRP PROTEIN SUBUNIT POP3"/>
    <property type="match status" value="1"/>
</dbReference>
<dbReference type="Pfam" id="PF08228">
    <property type="entry name" value="RNase_P_pop3"/>
    <property type="match status" value="1"/>
</dbReference>
<name>POP3_YEAST</name>
<accession>P53833</accession>
<accession>D6W0R2</accession>